<keyword id="KW-0067">ATP-binding</keyword>
<keyword id="KW-0963">Cytoplasm</keyword>
<keyword id="KW-0436">Ligase</keyword>
<keyword id="KW-0547">Nucleotide-binding</keyword>
<keyword id="KW-0694">RNA-binding</keyword>
<keyword id="KW-0819">tRNA processing</keyword>
<keyword id="KW-0820">tRNA-binding</keyword>
<proteinExistence type="inferred from homology"/>
<accession>B5XJU1</accession>
<sequence>MTVTGIIAEFNPFHNGHKYLLETAEGLKIIAMSGNFMQRGEPALIDKWIRSEMALKNGADIVVELPFFVSVQSADYFAQGAIDILCQLGIQQLAFGTENVIDYQKLIKVYEKKSEQMTAYLSTLEDTLSYPQKTQKMWEIFAGVKFSGQTPNHILGLSYAKASAGKHIQLCPIKRQGAAYHSKDKNHLLASASAIRQHLNDWDFISHSVPNAGLLINNPHMSWDHYFSFLKYQILNHSDLTSIFQVNDELASRIKKAIKVSQNIDHLVDTVATKRYTKSRVRRILTYILVNAKEPTLPKGIHILGFTSKGQAHLKKLKKSRPLITRIGAETWDEMTQKADSIYQLGHQDIPEQSFGRIPIIIKNERLN</sequence>
<comment type="function">
    <text evidence="1">Catalyzes the formation of N(4)-acetylcytidine (ac(4)C) at the wobble position of elongator tRNA(Met), using acetate and ATP as substrates. First activates an acetate ion to form acetyladenylate (Ac-AMP) and then transfers the acetyl group to tRNA to form ac(4)C34.</text>
</comment>
<comment type="catalytic activity">
    <reaction evidence="1">
        <text>cytidine(34) in elongator tRNA(Met) + acetate + ATP = N(4)-acetylcytidine(34) in elongator tRNA(Met) + AMP + diphosphate</text>
        <dbReference type="Rhea" id="RHEA:58144"/>
        <dbReference type="Rhea" id="RHEA-COMP:10693"/>
        <dbReference type="Rhea" id="RHEA-COMP:10694"/>
        <dbReference type="ChEBI" id="CHEBI:30089"/>
        <dbReference type="ChEBI" id="CHEBI:30616"/>
        <dbReference type="ChEBI" id="CHEBI:33019"/>
        <dbReference type="ChEBI" id="CHEBI:74900"/>
        <dbReference type="ChEBI" id="CHEBI:82748"/>
        <dbReference type="ChEBI" id="CHEBI:456215"/>
    </reaction>
</comment>
<comment type="subcellular location">
    <subcellularLocation>
        <location evidence="1">Cytoplasm</location>
    </subcellularLocation>
</comment>
<comment type="similarity">
    <text evidence="1">Belongs to the TmcAL family.</text>
</comment>
<dbReference type="EC" id="6.3.4.-" evidence="1"/>
<dbReference type="EMBL" id="CP000829">
    <property type="protein sequence ID" value="ACI60603.1"/>
    <property type="molecule type" value="Genomic_DNA"/>
</dbReference>
<dbReference type="SMR" id="B5XJU1"/>
<dbReference type="KEGG" id="soz:Spy49_0264"/>
<dbReference type="HOGENOM" id="CLU_038915_0_2_9"/>
<dbReference type="Proteomes" id="UP000001039">
    <property type="component" value="Chromosome"/>
</dbReference>
<dbReference type="GO" id="GO:0005737">
    <property type="term" value="C:cytoplasm"/>
    <property type="evidence" value="ECO:0007669"/>
    <property type="project" value="UniProtKB-SubCell"/>
</dbReference>
<dbReference type="GO" id="GO:0005524">
    <property type="term" value="F:ATP binding"/>
    <property type="evidence" value="ECO:0007669"/>
    <property type="project" value="UniProtKB-KW"/>
</dbReference>
<dbReference type="GO" id="GO:0016879">
    <property type="term" value="F:ligase activity, forming carbon-nitrogen bonds"/>
    <property type="evidence" value="ECO:0007669"/>
    <property type="project" value="UniProtKB-UniRule"/>
</dbReference>
<dbReference type="GO" id="GO:0000049">
    <property type="term" value="F:tRNA binding"/>
    <property type="evidence" value="ECO:0007669"/>
    <property type="project" value="UniProtKB-KW"/>
</dbReference>
<dbReference type="GO" id="GO:0006400">
    <property type="term" value="P:tRNA modification"/>
    <property type="evidence" value="ECO:0007669"/>
    <property type="project" value="UniProtKB-UniRule"/>
</dbReference>
<dbReference type="Gene3D" id="3.40.50.620">
    <property type="entry name" value="HUPs"/>
    <property type="match status" value="1"/>
</dbReference>
<dbReference type="HAMAP" id="MF_01539">
    <property type="entry name" value="TmcAL"/>
    <property type="match status" value="1"/>
</dbReference>
<dbReference type="InterPro" id="IPR014729">
    <property type="entry name" value="Rossmann-like_a/b/a_fold"/>
</dbReference>
<dbReference type="InterPro" id="IPR008513">
    <property type="entry name" value="tRNA(Met)_cyd_acetate_ligase"/>
</dbReference>
<dbReference type="NCBIfam" id="NF010191">
    <property type="entry name" value="PRK13670.1"/>
    <property type="match status" value="1"/>
</dbReference>
<dbReference type="PANTHER" id="PTHR37825">
    <property type="entry name" value="TRNA(MET) CYTIDINE ACETATE LIGASE"/>
    <property type="match status" value="1"/>
</dbReference>
<dbReference type="PANTHER" id="PTHR37825:SF1">
    <property type="entry name" value="TRNA(MET) CYTIDINE ACETATE LIGASE"/>
    <property type="match status" value="1"/>
</dbReference>
<dbReference type="Pfam" id="PF05636">
    <property type="entry name" value="HIGH_NTase1"/>
    <property type="match status" value="1"/>
</dbReference>
<dbReference type="SUPFAM" id="SSF52374">
    <property type="entry name" value="Nucleotidylyl transferase"/>
    <property type="match status" value="1"/>
</dbReference>
<feature type="chain" id="PRO_1000146635" description="tRNA(Met) cytidine acetate ligase">
    <location>
        <begin position="1"/>
        <end position="368"/>
    </location>
</feature>
<feature type="binding site" evidence="1">
    <location>
        <begin position="7"/>
        <end position="20"/>
    </location>
    <ligand>
        <name>ATP</name>
        <dbReference type="ChEBI" id="CHEBI:30616"/>
    </ligand>
</feature>
<feature type="binding site" evidence="1">
    <location>
        <position position="96"/>
    </location>
    <ligand>
        <name>ATP</name>
        <dbReference type="ChEBI" id="CHEBI:30616"/>
    </ligand>
</feature>
<feature type="binding site" evidence="1">
    <location>
        <position position="152"/>
    </location>
    <ligand>
        <name>ATP</name>
        <dbReference type="ChEBI" id="CHEBI:30616"/>
    </ligand>
</feature>
<feature type="binding site" evidence="1">
    <location>
        <position position="175"/>
    </location>
    <ligand>
        <name>ATP</name>
        <dbReference type="ChEBI" id="CHEBI:30616"/>
    </ligand>
</feature>
<reference key="1">
    <citation type="journal article" date="2008" name="J. Bacteriol.">
        <title>Genome sequence of a nephritogenic and highly transformable M49 strain of Streptococcus pyogenes.</title>
        <authorList>
            <person name="McShan W.M."/>
            <person name="Ferretti J.J."/>
            <person name="Karasawa T."/>
            <person name="Suvorov A.N."/>
            <person name="Lin S."/>
            <person name="Qin B."/>
            <person name="Jia H."/>
            <person name="Kenton S."/>
            <person name="Najar F."/>
            <person name="Wu H."/>
            <person name="Scott J."/>
            <person name="Roe B.A."/>
            <person name="Savic D.J."/>
        </authorList>
    </citation>
    <scope>NUCLEOTIDE SEQUENCE [LARGE SCALE GENOMIC DNA]</scope>
    <source>
        <strain>NZ131</strain>
    </source>
</reference>
<organism>
    <name type="scientific">Streptococcus pyogenes serotype M49 (strain NZ131)</name>
    <dbReference type="NCBI Taxonomy" id="471876"/>
    <lineage>
        <taxon>Bacteria</taxon>
        <taxon>Bacillati</taxon>
        <taxon>Bacillota</taxon>
        <taxon>Bacilli</taxon>
        <taxon>Lactobacillales</taxon>
        <taxon>Streptococcaceae</taxon>
        <taxon>Streptococcus</taxon>
    </lineage>
</organism>
<name>TMCAL_STRPZ</name>
<protein>
    <recommendedName>
        <fullName evidence="1">tRNA(Met) cytidine acetate ligase</fullName>
        <ecNumber evidence="1">6.3.4.-</ecNumber>
    </recommendedName>
</protein>
<evidence type="ECO:0000255" key="1">
    <source>
        <dbReference type="HAMAP-Rule" id="MF_01539"/>
    </source>
</evidence>
<gene>
    <name evidence="1" type="primary">tmcAL</name>
    <name type="ordered locus">Spy49_0264</name>
</gene>